<reference key="1">
    <citation type="journal article" date="1996" name="Science">
        <title>Complete genome sequence of the methanogenic archaeon, Methanococcus jannaschii.</title>
        <authorList>
            <person name="Bult C.J."/>
            <person name="White O."/>
            <person name="Olsen G.J."/>
            <person name="Zhou L."/>
            <person name="Fleischmann R.D."/>
            <person name="Sutton G.G."/>
            <person name="Blake J.A."/>
            <person name="FitzGerald L.M."/>
            <person name="Clayton R.A."/>
            <person name="Gocayne J.D."/>
            <person name="Kerlavage A.R."/>
            <person name="Dougherty B.A."/>
            <person name="Tomb J.-F."/>
            <person name="Adams M.D."/>
            <person name="Reich C.I."/>
            <person name="Overbeek R."/>
            <person name="Kirkness E.F."/>
            <person name="Weinstock K.G."/>
            <person name="Merrick J.M."/>
            <person name="Glodek A."/>
            <person name="Scott J.L."/>
            <person name="Geoghagen N.S.M."/>
            <person name="Weidman J.F."/>
            <person name="Fuhrmann J.L."/>
            <person name="Nguyen D."/>
            <person name="Utterback T.R."/>
            <person name="Kelley J.M."/>
            <person name="Peterson J.D."/>
            <person name="Sadow P.W."/>
            <person name="Hanna M.C."/>
            <person name="Cotton M.D."/>
            <person name="Roberts K.M."/>
            <person name="Hurst M.A."/>
            <person name="Kaine B.P."/>
            <person name="Borodovsky M."/>
            <person name="Klenk H.-P."/>
            <person name="Fraser C.M."/>
            <person name="Smith H.O."/>
            <person name="Woese C.R."/>
            <person name="Venter J.C."/>
        </authorList>
    </citation>
    <scope>NUCLEOTIDE SEQUENCE [LARGE SCALE GENOMIC DNA]</scope>
    <source>
        <strain>ATCC 43067 / DSM 2661 / JAL-1 / JCM 10045 / NBRC 100440</strain>
    </source>
</reference>
<feature type="chain" id="PRO_0000106676" description="Uncharacterized protein MJ0065">
    <location>
        <begin position="1"/>
        <end position="363"/>
    </location>
</feature>
<accession>Q60370</accession>
<name>Y065_METJA</name>
<keyword id="KW-1185">Reference proteome</keyword>
<proteinExistence type="predicted"/>
<sequence length="363" mass="40405">MRIGVVIHGPEIIDSGYALKIINLLKKFGEVKAKLGGTMGRVAVIDNNLQDIIDISEKLMPSQSLKKLANNDILILMNYGKSKITGHTFGKIVVERANLNKPIIQIERPGEEDGTIIIWNDDNSKIVKEIANYLSKELNLKIEKCISNGLEVWEKEGRVFRKVHGVDVGEAILVNGIVVGKAKSNEVILIAENGKLVDIIGGELKEGGIEKLKNVDLKKAVIKTGILRRHPTNPKIESKEIDEGYTIIINHAGEDVIEMIKNKGVVAVITIGDDTTTICGDILARFGIKIIGITDGDRDEILKNPVILKGSVIFLIKNMRDDDVGRILEKNLNLNKKYCYQELLDEVKKIFNDNNICYEEFVY</sequence>
<gene>
    <name type="ordered locus">MJ0065</name>
</gene>
<organism>
    <name type="scientific">Methanocaldococcus jannaschii (strain ATCC 43067 / DSM 2661 / JAL-1 / JCM 10045 / NBRC 100440)</name>
    <name type="common">Methanococcus jannaschii</name>
    <dbReference type="NCBI Taxonomy" id="243232"/>
    <lineage>
        <taxon>Archaea</taxon>
        <taxon>Methanobacteriati</taxon>
        <taxon>Methanobacteriota</taxon>
        <taxon>Methanomada group</taxon>
        <taxon>Methanococci</taxon>
        <taxon>Methanococcales</taxon>
        <taxon>Methanocaldococcaceae</taxon>
        <taxon>Methanocaldococcus</taxon>
    </lineage>
</organism>
<dbReference type="EMBL" id="L77117">
    <property type="protein sequence ID" value="AAB98045.1"/>
    <property type="molecule type" value="Genomic_DNA"/>
</dbReference>
<dbReference type="PIR" id="A64308">
    <property type="entry name" value="A64308"/>
</dbReference>
<dbReference type="RefSeq" id="WP_010869557.1">
    <property type="nucleotide sequence ID" value="NC_000909.1"/>
</dbReference>
<dbReference type="FunCoup" id="Q60370">
    <property type="interactions" value="1"/>
</dbReference>
<dbReference type="STRING" id="243232.MJ_0065"/>
<dbReference type="PaxDb" id="243232-MJ_0065"/>
<dbReference type="EnsemblBacteria" id="AAB98045">
    <property type="protein sequence ID" value="AAB98045"/>
    <property type="gene ID" value="MJ_0065"/>
</dbReference>
<dbReference type="GeneID" id="1450904"/>
<dbReference type="KEGG" id="mja:MJ_0065"/>
<dbReference type="eggNOG" id="arCOG03231">
    <property type="taxonomic scope" value="Archaea"/>
</dbReference>
<dbReference type="HOGENOM" id="CLU_038447_0_0_2"/>
<dbReference type="InParanoid" id="Q60370"/>
<dbReference type="OrthoDB" id="120859at2157"/>
<dbReference type="PhylomeDB" id="Q60370"/>
<dbReference type="Proteomes" id="UP000000805">
    <property type="component" value="Chromosome"/>
</dbReference>
<dbReference type="InterPro" id="IPR012032">
    <property type="entry name" value="UCP006598"/>
</dbReference>
<dbReference type="Pfam" id="PF09890">
    <property type="entry name" value="DUF2117"/>
    <property type="match status" value="1"/>
</dbReference>
<dbReference type="PIRSF" id="PIRSF006598">
    <property type="entry name" value="UCP006598"/>
    <property type="match status" value="1"/>
</dbReference>
<protein>
    <recommendedName>
        <fullName>Uncharacterized protein MJ0065</fullName>
    </recommendedName>
</protein>